<protein>
    <recommendedName>
        <fullName evidence="1">Elongation factor P-like protein</fullName>
    </recommendedName>
</protein>
<reference key="1">
    <citation type="journal article" date="2008" name="J. Bacteriol.">
        <title>Insights into the environmental resistance gene pool from the genome sequence of the multidrug-resistant environmental isolate Escherichia coli SMS-3-5.</title>
        <authorList>
            <person name="Fricke W.F."/>
            <person name="Wright M.S."/>
            <person name="Lindell A.H."/>
            <person name="Harkins D.M."/>
            <person name="Baker-Austin C."/>
            <person name="Ravel J."/>
            <person name="Stepanauskas R."/>
        </authorList>
    </citation>
    <scope>NUCLEOTIDE SEQUENCE [LARGE SCALE GENOMIC DNA]</scope>
    <source>
        <strain>SMS-3-5 / SECEC</strain>
    </source>
</reference>
<organism>
    <name type="scientific">Escherichia coli (strain SMS-3-5 / SECEC)</name>
    <dbReference type="NCBI Taxonomy" id="439855"/>
    <lineage>
        <taxon>Bacteria</taxon>
        <taxon>Pseudomonadati</taxon>
        <taxon>Pseudomonadota</taxon>
        <taxon>Gammaproteobacteria</taxon>
        <taxon>Enterobacterales</taxon>
        <taxon>Enterobacteriaceae</taxon>
        <taxon>Escherichia</taxon>
    </lineage>
</organism>
<accession>B1LKS0</accession>
<gene>
    <name evidence="1" type="primary">yeiP</name>
    <name type="ordered locus">EcSMS35_2320</name>
</gene>
<sequence length="190" mass="21533">MPRANEIKKGMVLNYNGKLLLVKDIDIQSPTARGAATLYKMRFSDVRTGLKVEERFKGDDIVDTVTLTRRYVDFSYVDGNEYVFMDKEDYTPYTFTKDQIEEELLFMPEGGMPDMQVLTWDGQLLALELPQTVDLEIVETAPGIKGASASARNKPATLSTGLVIQVPEYLSPGEKIRIHIEERRYMGRAD</sequence>
<comment type="similarity">
    <text evidence="1">Belongs to the elongation factor P family.</text>
</comment>
<feature type="chain" id="PRO_1000130916" description="Elongation factor P-like protein">
    <location>
        <begin position="1"/>
        <end position="190"/>
    </location>
</feature>
<name>EFPL_ECOSM</name>
<proteinExistence type="inferred from homology"/>
<evidence type="ECO:0000255" key="1">
    <source>
        <dbReference type="HAMAP-Rule" id="MF_00646"/>
    </source>
</evidence>
<dbReference type="EMBL" id="CP000970">
    <property type="protein sequence ID" value="ACB17600.1"/>
    <property type="molecule type" value="Genomic_DNA"/>
</dbReference>
<dbReference type="RefSeq" id="WP_001136827.1">
    <property type="nucleotide sequence ID" value="NC_010498.1"/>
</dbReference>
<dbReference type="SMR" id="B1LKS0"/>
<dbReference type="GeneID" id="93775010"/>
<dbReference type="KEGG" id="ecm:EcSMS35_2320"/>
<dbReference type="HOGENOM" id="CLU_074944_2_0_6"/>
<dbReference type="Proteomes" id="UP000007011">
    <property type="component" value="Chromosome"/>
</dbReference>
<dbReference type="GO" id="GO:0005829">
    <property type="term" value="C:cytosol"/>
    <property type="evidence" value="ECO:0007669"/>
    <property type="project" value="UniProtKB-ARBA"/>
</dbReference>
<dbReference type="GO" id="GO:0003746">
    <property type="term" value="F:translation elongation factor activity"/>
    <property type="evidence" value="ECO:0007669"/>
    <property type="project" value="UniProtKB-UniRule"/>
</dbReference>
<dbReference type="GO" id="GO:0043043">
    <property type="term" value="P:peptide biosynthetic process"/>
    <property type="evidence" value="ECO:0007669"/>
    <property type="project" value="InterPro"/>
</dbReference>
<dbReference type="CDD" id="cd04470">
    <property type="entry name" value="S1_EF-P_repeat_1"/>
    <property type="match status" value="1"/>
</dbReference>
<dbReference type="CDD" id="cd05794">
    <property type="entry name" value="S1_EF-P_repeat_2"/>
    <property type="match status" value="1"/>
</dbReference>
<dbReference type="FunFam" id="2.40.50.140:FF:000004">
    <property type="entry name" value="Elongation factor P"/>
    <property type="match status" value="1"/>
</dbReference>
<dbReference type="FunFam" id="2.30.30.30:FF:000011">
    <property type="entry name" value="Elongation factor P-like protein"/>
    <property type="match status" value="1"/>
</dbReference>
<dbReference type="FunFam" id="2.40.50.140:FF:000053">
    <property type="entry name" value="Elongation factor P-like protein"/>
    <property type="match status" value="1"/>
</dbReference>
<dbReference type="Gene3D" id="2.30.30.30">
    <property type="match status" value="1"/>
</dbReference>
<dbReference type="Gene3D" id="2.40.50.140">
    <property type="entry name" value="Nucleic acid-binding proteins"/>
    <property type="match status" value="2"/>
</dbReference>
<dbReference type="HAMAP" id="MF_00646">
    <property type="entry name" value="EFP"/>
    <property type="match status" value="1"/>
</dbReference>
<dbReference type="InterPro" id="IPR015365">
    <property type="entry name" value="Elong-fact-P_C"/>
</dbReference>
<dbReference type="InterPro" id="IPR012340">
    <property type="entry name" value="NA-bd_OB-fold"/>
</dbReference>
<dbReference type="InterPro" id="IPR014722">
    <property type="entry name" value="Rib_uL2_dom2"/>
</dbReference>
<dbReference type="InterPro" id="IPR020599">
    <property type="entry name" value="Transl_elong_fac_P/YeiP"/>
</dbReference>
<dbReference type="InterPro" id="IPR013185">
    <property type="entry name" value="Transl_elong_KOW-like"/>
</dbReference>
<dbReference type="InterPro" id="IPR011897">
    <property type="entry name" value="Transl_elong_p-like_YeiP"/>
</dbReference>
<dbReference type="InterPro" id="IPR001059">
    <property type="entry name" value="Transl_elong_P/YeiP_cen"/>
</dbReference>
<dbReference type="InterPro" id="IPR013852">
    <property type="entry name" value="Transl_elong_P/YeiP_CS"/>
</dbReference>
<dbReference type="InterPro" id="IPR008991">
    <property type="entry name" value="Translation_prot_SH3-like_sf"/>
</dbReference>
<dbReference type="NCBIfam" id="NF001810">
    <property type="entry name" value="PRK00529.1"/>
    <property type="match status" value="1"/>
</dbReference>
<dbReference type="NCBIfam" id="NF003392">
    <property type="entry name" value="PRK04542.1"/>
    <property type="match status" value="1"/>
</dbReference>
<dbReference type="NCBIfam" id="TIGR02178">
    <property type="entry name" value="yeiP"/>
    <property type="match status" value="1"/>
</dbReference>
<dbReference type="PANTHER" id="PTHR30053">
    <property type="entry name" value="ELONGATION FACTOR P"/>
    <property type="match status" value="1"/>
</dbReference>
<dbReference type="PANTHER" id="PTHR30053:SF14">
    <property type="entry name" value="TRANSLATION ELONGATION FACTOR KOW-LIKE DOMAIN-CONTAINING PROTEIN"/>
    <property type="match status" value="1"/>
</dbReference>
<dbReference type="Pfam" id="PF01132">
    <property type="entry name" value="EFP"/>
    <property type="match status" value="1"/>
</dbReference>
<dbReference type="Pfam" id="PF08207">
    <property type="entry name" value="EFP_N"/>
    <property type="match status" value="1"/>
</dbReference>
<dbReference type="Pfam" id="PF09285">
    <property type="entry name" value="Elong-fact-P_C"/>
    <property type="match status" value="1"/>
</dbReference>
<dbReference type="PIRSF" id="PIRSF005901">
    <property type="entry name" value="EF-P"/>
    <property type="match status" value="1"/>
</dbReference>
<dbReference type="SMART" id="SM01185">
    <property type="entry name" value="EFP"/>
    <property type="match status" value="1"/>
</dbReference>
<dbReference type="SMART" id="SM00841">
    <property type="entry name" value="Elong-fact-P_C"/>
    <property type="match status" value="1"/>
</dbReference>
<dbReference type="SUPFAM" id="SSF50249">
    <property type="entry name" value="Nucleic acid-binding proteins"/>
    <property type="match status" value="2"/>
</dbReference>
<dbReference type="SUPFAM" id="SSF50104">
    <property type="entry name" value="Translation proteins SH3-like domain"/>
    <property type="match status" value="1"/>
</dbReference>
<dbReference type="PROSITE" id="PS01275">
    <property type="entry name" value="EFP"/>
    <property type="match status" value="1"/>
</dbReference>